<reference key="1">
    <citation type="journal article" date="2005" name="Nat. Genet.">
        <title>The complete genome sequence of Francisella tularensis, the causative agent of tularemia.</title>
        <authorList>
            <person name="Larsson P."/>
            <person name="Oyston P.C.F."/>
            <person name="Chain P."/>
            <person name="Chu M.C."/>
            <person name="Duffield M."/>
            <person name="Fuxelius H.-H."/>
            <person name="Garcia E."/>
            <person name="Haelltorp G."/>
            <person name="Johansson D."/>
            <person name="Isherwood K.E."/>
            <person name="Karp P.D."/>
            <person name="Larsson E."/>
            <person name="Liu Y."/>
            <person name="Michell S."/>
            <person name="Prior J."/>
            <person name="Prior R."/>
            <person name="Malfatti S."/>
            <person name="Sjoestedt A."/>
            <person name="Svensson K."/>
            <person name="Thompson N."/>
            <person name="Vergez L."/>
            <person name="Wagg J.K."/>
            <person name="Wren B.W."/>
            <person name="Lindler L.E."/>
            <person name="Andersson S.G.E."/>
            <person name="Forsman M."/>
            <person name="Titball R.W."/>
        </authorList>
    </citation>
    <scope>NUCLEOTIDE SEQUENCE [LARGE SCALE GENOMIC DNA]</scope>
    <source>
        <strain>SCHU S4 / Schu 4</strain>
    </source>
</reference>
<accession>Q5NGL6</accession>
<dbReference type="EMBL" id="AJ749949">
    <property type="protein sequence ID" value="CAG45452.1"/>
    <property type="molecule type" value="Genomic_DNA"/>
</dbReference>
<dbReference type="RefSeq" id="WP_003016672.1">
    <property type="nucleotide sequence ID" value="NZ_CP010290.1"/>
</dbReference>
<dbReference type="RefSeq" id="YP_169826.1">
    <property type="nucleotide sequence ID" value="NC_006570.2"/>
</dbReference>
<dbReference type="SMR" id="Q5NGL6"/>
<dbReference type="STRING" id="177416.FTT_0819"/>
<dbReference type="DNASU" id="3191986"/>
<dbReference type="EnsemblBacteria" id="CAG45452">
    <property type="protein sequence ID" value="CAG45452"/>
    <property type="gene ID" value="FTT_0819"/>
</dbReference>
<dbReference type="KEGG" id="ftu:FTT_0819"/>
<dbReference type="eggNOG" id="COG0291">
    <property type="taxonomic scope" value="Bacteria"/>
</dbReference>
<dbReference type="OrthoDB" id="47476at2"/>
<dbReference type="Proteomes" id="UP000001174">
    <property type="component" value="Chromosome"/>
</dbReference>
<dbReference type="GO" id="GO:0022625">
    <property type="term" value="C:cytosolic large ribosomal subunit"/>
    <property type="evidence" value="ECO:0007669"/>
    <property type="project" value="TreeGrafter"/>
</dbReference>
<dbReference type="GO" id="GO:0003735">
    <property type="term" value="F:structural constituent of ribosome"/>
    <property type="evidence" value="ECO:0007669"/>
    <property type="project" value="InterPro"/>
</dbReference>
<dbReference type="GO" id="GO:0006412">
    <property type="term" value="P:translation"/>
    <property type="evidence" value="ECO:0007669"/>
    <property type="project" value="UniProtKB-UniRule"/>
</dbReference>
<dbReference type="FunFam" id="4.10.410.60:FF:000001">
    <property type="entry name" value="50S ribosomal protein L35"/>
    <property type="match status" value="1"/>
</dbReference>
<dbReference type="Gene3D" id="4.10.410.60">
    <property type="match status" value="1"/>
</dbReference>
<dbReference type="HAMAP" id="MF_00514">
    <property type="entry name" value="Ribosomal_bL35"/>
    <property type="match status" value="1"/>
</dbReference>
<dbReference type="InterPro" id="IPR001706">
    <property type="entry name" value="Ribosomal_bL35"/>
</dbReference>
<dbReference type="InterPro" id="IPR021137">
    <property type="entry name" value="Ribosomal_bL35-like"/>
</dbReference>
<dbReference type="InterPro" id="IPR018265">
    <property type="entry name" value="Ribosomal_bL35_CS"/>
</dbReference>
<dbReference type="InterPro" id="IPR037229">
    <property type="entry name" value="Ribosomal_bL35_sf"/>
</dbReference>
<dbReference type="NCBIfam" id="TIGR00001">
    <property type="entry name" value="rpmI_bact"/>
    <property type="match status" value="1"/>
</dbReference>
<dbReference type="PANTHER" id="PTHR33343">
    <property type="entry name" value="54S RIBOSOMAL PROTEIN BL35M"/>
    <property type="match status" value="1"/>
</dbReference>
<dbReference type="PANTHER" id="PTHR33343:SF1">
    <property type="entry name" value="LARGE RIBOSOMAL SUBUNIT PROTEIN BL35M"/>
    <property type="match status" value="1"/>
</dbReference>
<dbReference type="Pfam" id="PF01632">
    <property type="entry name" value="Ribosomal_L35p"/>
    <property type="match status" value="1"/>
</dbReference>
<dbReference type="PRINTS" id="PR00064">
    <property type="entry name" value="RIBOSOMALL35"/>
</dbReference>
<dbReference type="SUPFAM" id="SSF143034">
    <property type="entry name" value="L35p-like"/>
    <property type="match status" value="1"/>
</dbReference>
<dbReference type="PROSITE" id="PS00936">
    <property type="entry name" value="RIBOSOMAL_L35"/>
    <property type="match status" value="1"/>
</dbReference>
<name>RL35_FRATT</name>
<evidence type="ECO:0000255" key="1">
    <source>
        <dbReference type="HAMAP-Rule" id="MF_00514"/>
    </source>
</evidence>
<evidence type="ECO:0000256" key="2">
    <source>
        <dbReference type="SAM" id="MobiDB-lite"/>
    </source>
</evidence>
<evidence type="ECO:0000305" key="3"/>
<sequence length="65" mass="7370">MPKLKTKSGAAKRFKKTGKGGFKHRCANRAHINTKMTTKRKRHLRGMNQVAKVDTTSLVQQMPYA</sequence>
<gene>
    <name evidence="1" type="primary">rpmI</name>
    <name type="ordered locus">FTT_0819</name>
</gene>
<keyword id="KW-1185">Reference proteome</keyword>
<keyword id="KW-0687">Ribonucleoprotein</keyword>
<keyword id="KW-0689">Ribosomal protein</keyword>
<feature type="chain" id="PRO_0000258681" description="Large ribosomal subunit protein bL35">
    <location>
        <begin position="1"/>
        <end position="65"/>
    </location>
</feature>
<feature type="region of interest" description="Disordered" evidence="2">
    <location>
        <begin position="1"/>
        <end position="23"/>
    </location>
</feature>
<feature type="region of interest" description="Disordered" evidence="2">
    <location>
        <begin position="36"/>
        <end position="65"/>
    </location>
</feature>
<feature type="compositionally biased region" description="Polar residues" evidence="2">
    <location>
        <begin position="54"/>
        <end position="65"/>
    </location>
</feature>
<comment type="similarity">
    <text evidence="1">Belongs to the bacterial ribosomal protein bL35 family.</text>
</comment>
<organism>
    <name type="scientific">Francisella tularensis subsp. tularensis (strain SCHU S4 / Schu 4)</name>
    <dbReference type="NCBI Taxonomy" id="177416"/>
    <lineage>
        <taxon>Bacteria</taxon>
        <taxon>Pseudomonadati</taxon>
        <taxon>Pseudomonadota</taxon>
        <taxon>Gammaproteobacteria</taxon>
        <taxon>Thiotrichales</taxon>
        <taxon>Francisellaceae</taxon>
        <taxon>Francisella</taxon>
    </lineage>
</organism>
<proteinExistence type="inferred from homology"/>
<protein>
    <recommendedName>
        <fullName evidence="1">Large ribosomal subunit protein bL35</fullName>
    </recommendedName>
    <alternativeName>
        <fullName evidence="3">50S ribosomal protein L35</fullName>
    </alternativeName>
</protein>